<organism>
    <name type="scientific">Corynebacterium glutamicum (strain ATCC 13032 / DSM 20300 / JCM 1318 / BCRC 11384 / CCUG 27702 / LMG 3730 / NBRC 12168 / NCIMB 10025 / NRRL B-2784 / 534)</name>
    <dbReference type="NCBI Taxonomy" id="196627"/>
    <lineage>
        <taxon>Bacteria</taxon>
        <taxon>Bacillati</taxon>
        <taxon>Actinomycetota</taxon>
        <taxon>Actinomycetes</taxon>
        <taxon>Mycobacteriales</taxon>
        <taxon>Corynebacteriaceae</taxon>
        <taxon>Corynebacterium</taxon>
    </lineage>
</organism>
<protein>
    <recommendedName>
        <fullName>Anthranilate synthase component 1</fullName>
        <shortName>AS</shortName>
        <shortName>ASI</shortName>
        <ecNumber>4.1.3.27</ecNumber>
    </recommendedName>
</protein>
<sequence>MSTNPHVFSLDVRYHEDASALFAHLGGTTADDAALLESADITTKNGISSLAVLKSSVRITCTGNTVVTQPLTDSGRAVVARLTQQLGQYNTAENTFSFPASDAVDERERLTAPSTIEVLRKLQFESGYSDASLPLLMGGFAFDFLETFETLPAVEESVNTYPDYQFVLAEIVLDINHQDQTAKLAGVSNAPGELEAELNKLSLLIDAALPATEHAYQTTPHDGDTLRVVADIPDAQFRTQINELKENIYNGDIYQVVPARTFTAPCPDAFAAYLQLRATNPSPYMFYIRGLNEGRSYELFGASPESNLKFTAANRELQLYPIAGTRPRGLNPDGSINDELDIRNELDMRTDAKEIAEHTMLVDLARNDLARVSVPASRRVADLLQVDRYSRVMHLVSRVTATLDPELDALDAYRACMNMGTLTGAPKLRAMELLRGVEKRRRGSYGGAVGYLRGNGDMDNCIVIRSAFVQDGVAAVQAGAGVVRDSNPQSEADETLHKAYAVLNAIALAAGSTLEVIR</sequence>
<name>TRPE_CORGL</name>
<proteinExistence type="inferred from homology"/>
<evidence type="ECO:0000250" key="1"/>
<evidence type="ECO:0000250" key="2">
    <source>
        <dbReference type="UniProtKB" id="P00897"/>
    </source>
</evidence>
<evidence type="ECO:0000305" key="3"/>
<gene>
    <name type="primary">trpE</name>
    <name type="ordered locus">Cgl3029</name>
    <name type="ordered locus">cg3359</name>
</gene>
<comment type="function">
    <text evidence="1">Part of a heterotetrameric complex that catalyzes the two-step biosynthesis of anthranilate, an intermediate in the biosynthesis of L-tryptophan. In the first step, the glutamine-binding beta subunit (TrpG) of anthranilate synthase (AS) provides the glutamine amidotransferase activity which generates ammonia as a substrate that, along with chorismate, is used in the second step, catalyzed by the large alpha subunit of AS (TrpE) to produce anthranilate. In the absence of TrpG, TrpE can synthesize anthranilate directly from chorismate and high concentrations of ammonia (By similarity).</text>
</comment>
<comment type="catalytic activity">
    <reaction>
        <text>chorismate + L-glutamine = anthranilate + pyruvate + L-glutamate + H(+)</text>
        <dbReference type="Rhea" id="RHEA:21732"/>
        <dbReference type="ChEBI" id="CHEBI:15361"/>
        <dbReference type="ChEBI" id="CHEBI:15378"/>
        <dbReference type="ChEBI" id="CHEBI:16567"/>
        <dbReference type="ChEBI" id="CHEBI:29748"/>
        <dbReference type="ChEBI" id="CHEBI:29985"/>
        <dbReference type="ChEBI" id="CHEBI:58359"/>
        <dbReference type="EC" id="4.1.3.27"/>
    </reaction>
</comment>
<comment type="cofactor">
    <cofactor evidence="2">
        <name>Mg(2+)</name>
        <dbReference type="ChEBI" id="CHEBI:18420"/>
    </cofactor>
    <text evidence="2">Binds 1 Mg(2+) ion per subunit.</text>
</comment>
<comment type="activity regulation">
    <text evidence="1">Feedback inhibited by tryptophan.</text>
</comment>
<comment type="pathway">
    <text>Amino-acid biosynthesis; L-tryptophan biosynthesis; L-tryptophan from chorismate: step 1/5.</text>
</comment>
<comment type="subunit">
    <text evidence="1">Heterotetramer consisting of two non-identical subunits: a beta subunit (TrpG) and a large alpha subunit (TrpE).</text>
</comment>
<comment type="similarity">
    <text evidence="3">Belongs to the anthranilate synthase component I family.</text>
</comment>
<reference key="1">
    <citation type="journal article" date="1986" name="Nucleic Acids Res.">
        <title>Complete nucleotide and deduced amino acid sequences of the Brevibacterium lactofermentum tryptophan operon.</title>
        <authorList>
            <person name="Matsui K."/>
            <person name="Sano K."/>
            <person name="Ohtsubo E."/>
        </authorList>
    </citation>
    <scope>NUCLEOTIDE SEQUENCE [GENOMIC DNA]</scope>
</reference>
<reference key="2">
    <citation type="journal article" date="1990" name="Nucleic Acids Res.">
        <title>Nucleotide sequence of the Corynebacterium glutamicum trpE gene.</title>
        <authorList>
            <person name="Heery D.M."/>
            <person name="Dunican L.K."/>
        </authorList>
    </citation>
    <scope>NUCLEOTIDE SEQUENCE [GENOMIC DNA]</scope>
    <source>
        <strain>ATCC 13059 / LMG 3658 / NCIB 10332 / AS019 / 613</strain>
    </source>
</reference>
<reference key="3">
    <citation type="journal article" date="2003" name="Appl. Microbiol. Biotechnol.">
        <title>The Corynebacterium glutamicum genome: features and impacts on biotechnological processes.</title>
        <authorList>
            <person name="Ikeda M."/>
            <person name="Nakagawa S."/>
        </authorList>
    </citation>
    <scope>NUCLEOTIDE SEQUENCE [LARGE SCALE GENOMIC DNA]</scope>
    <source>
        <strain>ATCC 13032 / DSM 20300 / JCM 1318 / BCRC 11384 / CCUG 27702 / LMG 3730 / NBRC 12168 / NCIMB 10025 / NRRL B-2784 / 534</strain>
    </source>
</reference>
<reference key="4">
    <citation type="journal article" date="2003" name="J. Biotechnol.">
        <title>The complete Corynebacterium glutamicum ATCC 13032 genome sequence and its impact on the production of L-aspartate-derived amino acids and vitamins.</title>
        <authorList>
            <person name="Kalinowski J."/>
            <person name="Bathe B."/>
            <person name="Bartels D."/>
            <person name="Bischoff N."/>
            <person name="Bott M."/>
            <person name="Burkovski A."/>
            <person name="Dusch N."/>
            <person name="Eggeling L."/>
            <person name="Eikmanns B.J."/>
            <person name="Gaigalat L."/>
            <person name="Goesmann A."/>
            <person name="Hartmann M."/>
            <person name="Huthmacher K."/>
            <person name="Kraemer R."/>
            <person name="Linke B."/>
            <person name="McHardy A.C."/>
            <person name="Meyer F."/>
            <person name="Moeckel B."/>
            <person name="Pfefferle W."/>
            <person name="Puehler A."/>
            <person name="Rey D.A."/>
            <person name="Rueckert C."/>
            <person name="Rupp O."/>
            <person name="Sahm H."/>
            <person name="Wendisch V.F."/>
            <person name="Wiegraebe I."/>
            <person name="Tauch A."/>
        </authorList>
    </citation>
    <scope>NUCLEOTIDE SEQUENCE [LARGE SCALE GENOMIC DNA]</scope>
    <source>
        <strain>ATCC 13032 / DSM 20300 / JCM 1318 / BCRC 11384 / CCUG 27702 / LMG 3730 / NBRC 12168 / NCIMB 10025 / NRRL B-2784 / 534</strain>
    </source>
</reference>
<reference key="5">
    <citation type="journal article" date="1987" name="Gene">
        <title>Structure and function of the trp operon control regions of Brevibacterium lactofermentum, a glutamic-acid-producing bacterium.</title>
        <authorList>
            <person name="Sano K."/>
            <person name="Matsui K."/>
        </authorList>
    </citation>
    <scope>NUCLEOTIDE SEQUENCE [GENOMIC DNA] OF 1-275</scope>
</reference>
<reference key="6">
    <citation type="journal article" date="1987" name="J. Bacteriol.">
        <title>Two single-base-pair substitutions causing desensitization to tryptophan feedback inhibition of anthranilate synthase and enhanced expression of tryptophan genes of Brevibacterium lactofermentum.</title>
        <authorList>
            <person name="Matsui K."/>
            <person name="Miwa K."/>
            <person name="Sano K."/>
        </authorList>
    </citation>
    <scope>NUCLEOTIDE SEQUENCE [GENOMIC DNA] OF 1-201</scope>
</reference>
<dbReference type="EC" id="4.1.3.27"/>
<dbReference type="EMBL" id="X04960">
    <property type="protein sequence ID" value="CAA28623.1"/>
    <property type="molecule type" value="Genomic_DNA"/>
</dbReference>
<dbReference type="EMBL" id="X55994">
    <property type="protein sequence ID" value="CAA39467.1"/>
    <property type="molecule type" value="Genomic_DNA"/>
</dbReference>
<dbReference type="EMBL" id="BA000036">
    <property type="protein sequence ID" value="BAC00424.1"/>
    <property type="molecule type" value="Genomic_DNA"/>
</dbReference>
<dbReference type="EMBL" id="BX927157">
    <property type="protein sequence ID" value="CAF18969.1"/>
    <property type="molecule type" value="Genomic_DNA"/>
</dbReference>
<dbReference type="EMBL" id="AH003259">
    <property type="protein sequence ID" value="AAA83989.1"/>
    <property type="molecule type" value="Genomic_DNA"/>
</dbReference>
<dbReference type="EMBL" id="M17892">
    <property type="protein sequence ID" value="AAB59111.1"/>
    <property type="molecule type" value="Genomic_DNA"/>
</dbReference>
<dbReference type="PIR" id="B24723">
    <property type="entry name" value="B24723"/>
</dbReference>
<dbReference type="RefSeq" id="NP_602223.1">
    <property type="nucleotide sequence ID" value="NC_003450.3"/>
</dbReference>
<dbReference type="RefSeq" id="WP_011015581.1">
    <property type="nucleotide sequence ID" value="NC_006958.1"/>
</dbReference>
<dbReference type="SMR" id="P06557"/>
<dbReference type="STRING" id="196627.cg3359"/>
<dbReference type="KEGG" id="cgb:cg3359"/>
<dbReference type="KEGG" id="cgl:Cgl3029"/>
<dbReference type="PATRIC" id="fig|196627.13.peg.2964"/>
<dbReference type="eggNOG" id="COG0147">
    <property type="taxonomic scope" value="Bacteria"/>
</dbReference>
<dbReference type="HOGENOM" id="CLU_006493_9_4_11"/>
<dbReference type="OrthoDB" id="3518032at2"/>
<dbReference type="BioCyc" id="CORYNE:G18NG-12651-MONOMER"/>
<dbReference type="UniPathway" id="UPA00035">
    <property type="reaction ID" value="UER00040"/>
</dbReference>
<dbReference type="Proteomes" id="UP000000582">
    <property type="component" value="Chromosome"/>
</dbReference>
<dbReference type="Proteomes" id="UP000001009">
    <property type="component" value="Chromosome"/>
</dbReference>
<dbReference type="GO" id="GO:0004049">
    <property type="term" value="F:anthranilate synthase activity"/>
    <property type="evidence" value="ECO:0007669"/>
    <property type="project" value="UniProtKB-EC"/>
</dbReference>
<dbReference type="GO" id="GO:0046872">
    <property type="term" value="F:metal ion binding"/>
    <property type="evidence" value="ECO:0007669"/>
    <property type="project" value="UniProtKB-KW"/>
</dbReference>
<dbReference type="GO" id="GO:0000162">
    <property type="term" value="P:L-tryptophan biosynthetic process"/>
    <property type="evidence" value="ECO:0007669"/>
    <property type="project" value="UniProtKB-UniPathway"/>
</dbReference>
<dbReference type="Gene3D" id="3.60.120.10">
    <property type="entry name" value="Anthranilate synthase"/>
    <property type="match status" value="1"/>
</dbReference>
<dbReference type="InterPro" id="IPR005801">
    <property type="entry name" value="ADC_synthase"/>
</dbReference>
<dbReference type="InterPro" id="IPR019999">
    <property type="entry name" value="Anth_synth_I-like"/>
</dbReference>
<dbReference type="InterPro" id="IPR006805">
    <property type="entry name" value="Anth_synth_I_N"/>
</dbReference>
<dbReference type="InterPro" id="IPR005257">
    <property type="entry name" value="Anth_synth_I_TrpE"/>
</dbReference>
<dbReference type="InterPro" id="IPR015890">
    <property type="entry name" value="Chorismate_C"/>
</dbReference>
<dbReference type="NCBIfam" id="NF010079">
    <property type="entry name" value="PRK13564.1"/>
    <property type="match status" value="1"/>
</dbReference>
<dbReference type="NCBIfam" id="TIGR00565">
    <property type="entry name" value="trpE_proteo"/>
    <property type="match status" value="1"/>
</dbReference>
<dbReference type="PANTHER" id="PTHR11236">
    <property type="entry name" value="AMINOBENZOATE/ANTHRANILATE SYNTHASE"/>
    <property type="match status" value="1"/>
</dbReference>
<dbReference type="PANTHER" id="PTHR11236:SF49">
    <property type="entry name" value="ANTHRANILATE SYNTHASE COMPONENT 1"/>
    <property type="match status" value="1"/>
</dbReference>
<dbReference type="Pfam" id="PF04715">
    <property type="entry name" value="Anth_synt_I_N"/>
    <property type="match status" value="1"/>
</dbReference>
<dbReference type="Pfam" id="PF00425">
    <property type="entry name" value="Chorismate_bind"/>
    <property type="match status" value="1"/>
</dbReference>
<dbReference type="PIRSF" id="PIRSF001373">
    <property type="entry name" value="TrpE"/>
    <property type="match status" value="1"/>
</dbReference>
<dbReference type="PRINTS" id="PR00095">
    <property type="entry name" value="ANTSNTHASEI"/>
</dbReference>
<dbReference type="SUPFAM" id="SSF56322">
    <property type="entry name" value="ADC synthase"/>
    <property type="match status" value="1"/>
</dbReference>
<keyword id="KW-0028">Amino-acid biosynthesis</keyword>
<keyword id="KW-0057">Aromatic amino acid biosynthesis</keyword>
<keyword id="KW-0456">Lyase</keyword>
<keyword id="KW-0460">Magnesium</keyword>
<keyword id="KW-0479">Metal-binding</keyword>
<keyword id="KW-1185">Reference proteome</keyword>
<keyword id="KW-0822">Tryptophan biosynthesis</keyword>
<accession>P06557</accession>
<feature type="chain" id="PRO_0000154091" description="Anthranilate synthase component 1">
    <location>
        <begin position="1"/>
        <end position="518"/>
    </location>
</feature>
<feature type="binding site" evidence="2">
    <location>
        <position position="38"/>
    </location>
    <ligand>
        <name>L-tryptophan</name>
        <dbReference type="ChEBI" id="CHEBI:57912"/>
    </ligand>
</feature>
<feature type="binding site" evidence="2">
    <location>
        <begin position="283"/>
        <end position="285"/>
    </location>
    <ligand>
        <name>L-tryptophan</name>
        <dbReference type="ChEBI" id="CHEBI:57912"/>
    </ligand>
</feature>
<feature type="binding site" evidence="2">
    <location>
        <begin position="324"/>
        <end position="325"/>
    </location>
    <ligand>
        <name>chorismate</name>
        <dbReference type="ChEBI" id="CHEBI:29748"/>
    </ligand>
</feature>
<feature type="binding site" evidence="2">
    <location>
        <position position="357"/>
    </location>
    <ligand>
        <name>Mg(2+)</name>
        <dbReference type="ChEBI" id="CHEBI:18420"/>
    </ligand>
</feature>
<feature type="binding site" evidence="2">
    <location>
        <position position="445"/>
    </location>
    <ligand>
        <name>chorismate</name>
        <dbReference type="ChEBI" id="CHEBI:29748"/>
    </ligand>
</feature>
<feature type="binding site" evidence="2">
    <location>
        <position position="465"/>
    </location>
    <ligand>
        <name>chorismate</name>
        <dbReference type="ChEBI" id="CHEBI:29748"/>
    </ligand>
</feature>
<feature type="binding site" evidence="2">
    <location>
        <begin position="479"/>
        <end position="481"/>
    </location>
    <ligand>
        <name>chorismate</name>
        <dbReference type="ChEBI" id="CHEBI:29748"/>
    </ligand>
</feature>
<feature type="binding site" evidence="2">
    <location>
        <position position="481"/>
    </location>
    <ligand>
        <name>chorismate</name>
        <dbReference type="ChEBI" id="CHEBI:29748"/>
    </ligand>
</feature>
<feature type="binding site" evidence="2">
    <location>
        <position position="494"/>
    </location>
    <ligand>
        <name>Mg(2+)</name>
        <dbReference type="ChEBI" id="CHEBI:18420"/>
    </ligand>
</feature>
<feature type="sequence conflict" description="In Ref. 6; AAB59111." evidence="3" ref="6">
    <original>E</original>
    <variation>A</variation>
    <location>
        <position position="16"/>
    </location>
</feature>
<feature type="sequence conflict" description="In Ref. 1; CAA28623, 2; CAA39467, 5; AAA83989 and 6; AAB59111." evidence="3" ref="1 2 5 6">
    <original>A</original>
    <variation>T</variation>
    <location>
        <position position="185"/>
    </location>
</feature>
<feature type="sequence conflict" description="In Ref. 1; CAA28623 and 2; CAA39467." evidence="3" ref="1 2">
    <original>EH</original>
    <variation>DD</variation>
    <location>
        <begin position="357"/>
        <end position="358"/>
    </location>
</feature>